<gene>
    <name evidence="1" type="primary">rpsR</name>
    <name type="ordered locus">IL1938</name>
</gene>
<evidence type="ECO:0000255" key="1">
    <source>
        <dbReference type="HAMAP-Rule" id="MF_00270"/>
    </source>
</evidence>
<evidence type="ECO:0000305" key="2"/>
<feature type="chain" id="PRO_1000003510" description="Small ribosomal subunit protein bS18">
    <location>
        <begin position="1"/>
        <end position="75"/>
    </location>
</feature>
<comment type="function">
    <text evidence="1">Binds as a heterodimer with protein bS6 to the central domain of the 16S rRNA, where it helps stabilize the platform of the 30S subunit.</text>
</comment>
<comment type="subunit">
    <text evidence="1">Part of the 30S ribosomal subunit. Forms a tight heterodimer with protein bS6.</text>
</comment>
<comment type="similarity">
    <text evidence="1">Belongs to the bacterial ribosomal protein bS18 family.</text>
</comment>
<accession>Q5QY03</accession>
<name>RS18_IDILO</name>
<sequence length="75" mass="8859">MARFFRRRKFCRFKADGVKEIDYKDIATLKNYITETGKIVPSRITGTSAKYQRQLARAIKRARYLSLLPYTDSHQ</sequence>
<organism>
    <name type="scientific">Idiomarina loihiensis (strain ATCC BAA-735 / DSM 15497 / L2-TR)</name>
    <dbReference type="NCBI Taxonomy" id="283942"/>
    <lineage>
        <taxon>Bacteria</taxon>
        <taxon>Pseudomonadati</taxon>
        <taxon>Pseudomonadota</taxon>
        <taxon>Gammaproteobacteria</taxon>
        <taxon>Alteromonadales</taxon>
        <taxon>Idiomarinaceae</taxon>
        <taxon>Idiomarina</taxon>
    </lineage>
</organism>
<dbReference type="EMBL" id="AE017340">
    <property type="protein sequence ID" value="AAV82770.1"/>
    <property type="molecule type" value="Genomic_DNA"/>
</dbReference>
<dbReference type="RefSeq" id="WP_011235166.1">
    <property type="nucleotide sequence ID" value="NC_006512.1"/>
</dbReference>
<dbReference type="SMR" id="Q5QY03"/>
<dbReference type="STRING" id="283942.IL1938"/>
<dbReference type="GeneID" id="78252657"/>
<dbReference type="KEGG" id="ilo:IL1938"/>
<dbReference type="eggNOG" id="COG0238">
    <property type="taxonomic scope" value="Bacteria"/>
</dbReference>
<dbReference type="HOGENOM" id="CLU_148710_2_3_6"/>
<dbReference type="OrthoDB" id="9812008at2"/>
<dbReference type="Proteomes" id="UP000001171">
    <property type="component" value="Chromosome"/>
</dbReference>
<dbReference type="GO" id="GO:0022627">
    <property type="term" value="C:cytosolic small ribosomal subunit"/>
    <property type="evidence" value="ECO:0007669"/>
    <property type="project" value="TreeGrafter"/>
</dbReference>
<dbReference type="GO" id="GO:0070181">
    <property type="term" value="F:small ribosomal subunit rRNA binding"/>
    <property type="evidence" value="ECO:0007669"/>
    <property type="project" value="TreeGrafter"/>
</dbReference>
<dbReference type="GO" id="GO:0003735">
    <property type="term" value="F:structural constituent of ribosome"/>
    <property type="evidence" value="ECO:0007669"/>
    <property type="project" value="InterPro"/>
</dbReference>
<dbReference type="GO" id="GO:0006412">
    <property type="term" value="P:translation"/>
    <property type="evidence" value="ECO:0007669"/>
    <property type="project" value="UniProtKB-UniRule"/>
</dbReference>
<dbReference type="FunFam" id="4.10.640.10:FF:000001">
    <property type="entry name" value="30S ribosomal protein S18"/>
    <property type="match status" value="1"/>
</dbReference>
<dbReference type="Gene3D" id="4.10.640.10">
    <property type="entry name" value="Ribosomal protein S18"/>
    <property type="match status" value="1"/>
</dbReference>
<dbReference type="HAMAP" id="MF_00270">
    <property type="entry name" value="Ribosomal_bS18"/>
    <property type="match status" value="1"/>
</dbReference>
<dbReference type="InterPro" id="IPR001648">
    <property type="entry name" value="Ribosomal_bS18"/>
</dbReference>
<dbReference type="InterPro" id="IPR018275">
    <property type="entry name" value="Ribosomal_bS18_CS"/>
</dbReference>
<dbReference type="InterPro" id="IPR036870">
    <property type="entry name" value="Ribosomal_bS18_sf"/>
</dbReference>
<dbReference type="NCBIfam" id="TIGR00165">
    <property type="entry name" value="S18"/>
    <property type="match status" value="1"/>
</dbReference>
<dbReference type="PANTHER" id="PTHR13479">
    <property type="entry name" value="30S RIBOSOMAL PROTEIN S18"/>
    <property type="match status" value="1"/>
</dbReference>
<dbReference type="PANTHER" id="PTHR13479:SF40">
    <property type="entry name" value="SMALL RIBOSOMAL SUBUNIT PROTEIN BS18M"/>
    <property type="match status" value="1"/>
</dbReference>
<dbReference type="Pfam" id="PF01084">
    <property type="entry name" value="Ribosomal_S18"/>
    <property type="match status" value="1"/>
</dbReference>
<dbReference type="PRINTS" id="PR00974">
    <property type="entry name" value="RIBOSOMALS18"/>
</dbReference>
<dbReference type="SUPFAM" id="SSF46911">
    <property type="entry name" value="Ribosomal protein S18"/>
    <property type="match status" value="1"/>
</dbReference>
<dbReference type="PROSITE" id="PS00057">
    <property type="entry name" value="RIBOSOMAL_S18"/>
    <property type="match status" value="1"/>
</dbReference>
<proteinExistence type="inferred from homology"/>
<protein>
    <recommendedName>
        <fullName evidence="1">Small ribosomal subunit protein bS18</fullName>
    </recommendedName>
    <alternativeName>
        <fullName evidence="2">30S ribosomal protein S18</fullName>
    </alternativeName>
</protein>
<reference key="1">
    <citation type="journal article" date="2004" name="Proc. Natl. Acad. Sci. U.S.A.">
        <title>Genome sequence of the deep-sea gamma-proteobacterium Idiomarina loihiensis reveals amino acid fermentation as a source of carbon and energy.</title>
        <authorList>
            <person name="Hou S."/>
            <person name="Saw J.H."/>
            <person name="Lee K.S."/>
            <person name="Freitas T.A."/>
            <person name="Belisle C."/>
            <person name="Kawarabayasi Y."/>
            <person name="Donachie S.P."/>
            <person name="Pikina A."/>
            <person name="Galperin M.Y."/>
            <person name="Koonin E.V."/>
            <person name="Makarova K.S."/>
            <person name="Omelchenko M.V."/>
            <person name="Sorokin A."/>
            <person name="Wolf Y.I."/>
            <person name="Li Q.X."/>
            <person name="Keum Y.S."/>
            <person name="Campbell S."/>
            <person name="Denery J."/>
            <person name="Aizawa S."/>
            <person name="Shibata S."/>
            <person name="Malahoff A."/>
            <person name="Alam M."/>
        </authorList>
    </citation>
    <scope>NUCLEOTIDE SEQUENCE [LARGE SCALE GENOMIC DNA]</scope>
    <source>
        <strain>ATCC BAA-735 / DSM 15497 / L2-TR</strain>
    </source>
</reference>
<keyword id="KW-1185">Reference proteome</keyword>
<keyword id="KW-0687">Ribonucleoprotein</keyword>
<keyword id="KW-0689">Ribosomal protein</keyword>
<keyword id="KW-0694">RNA-binding</keyword>
<keyword id="KW-0699">rRNA-binding</keyword>